<proteinExistence type="inferred from homology"/>
<name>RPOD_TREPA</name>
<gene>
    <name evidence="1" type="primary">rpoD</name>
    <name type="ordered locus">TP_0493</name>
</gene>
<reference key="1">
    <citation type="journal article" date="1998" name="Science">
        <title>Complete genome sequence of Treponema pallidum, the syphilis spirochete.</title>
        <authorList>
            <person name="Fraser C.M."/>
            <person name="Norris S.J."/>
            <person name="Weinstock G.M."/>
            <person name="White O."/>
            <person name="Sutton G.G."/>
            <person name="Dodson R.J."/>
            <person name="Gwinn M.L."/>
            <person name="Hickey E.K."/>
            <person name="Clayton R.A."/>
            <person name="Ketchum K.A."/>
            <person name="Sodergren E."/>
            <person name="Hardham J.M."/>
            <person name="McLeod M.P."/>
            <person name="Salzberg S.L."/>
            <person name="Peterson J.D."/>
            <person name="Khalak H.G."/>
            <person name="Richardson D.L."/>
            <person name="Howell J.K."/>
            <person name="Chidambaram M."/>
            <person name="Utterback T.R."/>
            <person name="McDonald L.A."/>
            <person name="Artiach P."/>
            <person name="Bowman C."/>
            <person name="Cotton M.D."/>
            <person name="Fujii C."/>
            <person name="Garland S.A."/>
            <person name="Hatch B."/>
            <person name="Horst K."/>
            <person name="Roberts K.M."/>
            <person name="Sandusky M."/>
            <person name="Weidman J.F."/>
            <person name="Smith H.O."/>
            <person name="Venter J.C."/>
        </authorList>
    </citation>
    <scope>NUCLEOTIDE SEQUENCE [LARGE SCALE GENOMIC DNA]</scope>
    <source>
        <strain>Nichols</strain>
    </source>
</reference>
<accession>O83506</accession>
<dbReference type="EMBL" id="AE000520">
    <property type="protein sequence ID" value="AAC65480.1"/>
    <property type="molecule type" value="Genomic_DNA"/>
</dbReference>
<dbReference type="PIR" id="E71318">
    <property type="entry name" value="E71318"/>
</dbReference>
<dbReference type="RefSeq" id="WP_010881942.1">
    <property type="nucleotide sequence ID" value="NC_021490.2"/>
</dbReference>
<dbReference type="SMR" id="O83506"/>
<dbReference type="STRING" id="243276.TP_0493"/>
<dbReference type="EnsemblBacteria" id="AAC65480">
    <property type="protein sequence ID" value="AAC65480"/>
    <property type="gene ID" value="TP_0493"/>
</dbReference>
<dbReference type="GeneID" id="93876261"/>
<dbReference type="KEGG" id="tpa:TP_0493"/>
<dbReference type="KEGG" id="tpw:TPANIC_0493"/>
<dbReference type="eggNOG" id="COG0568">
    <property type="taxonomic scope" value="Bacteria"/>
</dbReference>
<dbReference type="HOGENOM" id="CLU_014793_7_2_12"/>
<dbReference type="OrthoDB" id="9809557at2"/>
<dbReference type="Proteomes" id="UP000000811">
    <property type="component" value="Chromosome"/>
</dbReference>
<dbReference type="GO" id="GO:0005737">
    <property type="term" value="C:cytoplasm"/>
    <property type="evidence" value="ECO:0007669"/>
    <property type="project" value="UniProtKB-SubCell"/>
</dbReference>
<dbReference type="GO" id="GO:0003677">
    <property type="term" value="F:DNA binding"/>
    <property type="evidence" value="ECO:0007669"/>
    <property type="project" value="UniProtKB-UniRule"/>
</dbReference>
<dbReference type="GO" id="GO:0016987">
    <property type="term" value="F:sigma factor activity"/>
    <property type="evidence" value="ECO:0007669"/>
    <property type="project" value="UniProtKB-UniRule"/>
</dbReference>
<dbReference type="GO" id="GO:0006352">
    <property type="term" value="P:DNA-templated transcription initiation"/>
    <property type="evidence" value="ECO:0007669"/>
    <property type="project" value="UniProtKB-UniRule"/>
</dbReference>
<dbReference type="CDD" id="cd06171">
    <property type="entry name" value="Sigma70_r4"/>
    <property type="match status" value="1"/>
</dbReference>
<dbReference type="FunFam" id="1.10.601.10:FF:000001">
    <property type="entry name" value="RNA polymerase sigma factor SigA"/>
    <property type="match status" value="1"/>
</dbReference>
<dbReference type="Gene3D" id="1.10.601.10">
    <property type="entry name" value="RNA Polymerase Primary Sigma Factor"/>
    <property type="match status" value="1"/>
</dbReference>
<dbReference type="Gene3D" id="1.10.220.120">
    <property type="entry name" value="Sigma-70 factor, region 1.1"/>
    <property type="match status" value="1"/>
</dbReference>
<dbReference type="Gene3D" id="1.10.10.10">
    <property type="entry name" value="Winged helix-like DNA-binding domain superfamily/Winged helix DNA-binding domain"/>
    <property type="match status" value="2"/>
</dbReference>
<dbReference type="HAMAP" id="MF_00963">
    <property type="entry name" value="Sigma70_RpoD_SigA"/>
    <property type="match status" value="1"/>
</dbReference>
<dbReference type="InterPro" id="IPR014284">
    <property type="entry name" value="RNA_pol_sigma-70_dom"/>
</dbReference>
<dbReference type="InterPro" id="IPR000943">
    <property type="entry name" value="RNA_pol_sigma70"/>
</dbReference>
<dbReference type="InterPro" id="IPR009042">
    <property type="entry name" value="RNA_pol_sigma70_r1_2"/>
</dbReference>
<dbReference type="InterPro" id="IPR007627">
    <property type="entry name" value="RNA_pol_sigma70_r2"/>
</dbReference>
<dbReference type="InterPro" id="IPR007624">
    <property type="entry name" value="RNA_pol_sigma70_r3"/>
</dbReference>
<dbReference type="InterPro" id="IPR007630">
    <property type="entry name" value="RNA_pol_sigma70_r4"/>
</dbReference>
<dbReference type="InterPro" id="IPR007127">
    <property type="entry name" value="RNA_pol_sigma_70_r1_1"/>
</dbReference>
<dbReference type="InterPro" id="IPR042189">
    <property type="entry name" value="RNA_pol_sigma_70_r1_1_sf"/>
</dbReference>
<dbReference type="InterPro" id="IPR013325">
    <property type="entry name" value="RNA_pol_sigma_r2"/>
</dbReference>
<dbReference type="InterPro" id="IPR013324">
    <property type="entry name" value="RNA_pol_sigma_r3/r4-like"/>
</dbReference>
<dbReference type="InterPro" id="IPR012760">
    <property type="entry name" value="RNA_pol_sigma_RpoD_C"/>
</dbReference>
<dbReference type="InterPro" id="IPR050239">
    <property type="entry name" value="Sigma-70_RNA_pol_init_factors"/>
</dbReference>
<dbReference type="InterPro" id="IPR028630">
    <property type="entry name" value="Sigma70_RpoD"/>
</dbReference>
<dbReference type="InterPro" id="IPR036388">
    <property type="entry name" value="WH-like_DNA-bd_sf"/>
</dbReference>
<dbReference type="NCBIfam" id="NF004208">
    <property type="entry name" value="PRK05658.1"/>
    <property type="match status" value="1"/>
</dbReference>
<dbReference type="NCBIfam" id="TIGR02393">
    <property type="entry name" value="RpoD_Cterm"/>
    <property type="match status" value="1"/>
</dbReference>
<dbReference type="NCBIfam" id="TIGR02937">
    <property type="entry name" value="sigma70-ECF"/>
    <property type="match status" value="1"/>
</dbReference>
<dbReference type="PANTHER" id="PTHR30603">
    <property type="entry name" value="RNA POLYMERASE SIGMA FACTOR RPO"/>
    <property type="match status" value="1"/>
</dbReference>
<dbReference type="PANTHER" id="PTHR30603:SF60">
    <property type="entry name" value="RNA POLYMERASE SIGMA FACTOR RPOD"/>
    <property type="match status" value="1"/>
</dbReference>
<dbReference type="Pfam" id="PF03979">
    <property type="entry name" value="Sigma70_r1_1"/>
    <property type="match status" value="1"/>
</dbReference>
<dbReference type="Pfam" id="PF00140">
    <property type="entry name" value="Sigma70_r1_2"/>
    <property type="match status" value="1"/>
</dbReference>
<dbReference type="Pfam" id="PF04542">
    <property type="entry name" value="Sigma70_r2"/>
    <property type="match status" value="1"/>
</dbReference>
<dbReference type="Pfam" id="PF04539">
    <property type="entry name" value="Sigma70_r3"/>
    <property type="match status" value="1"/>
</dbReference>
<dbReference type="Pfam" id="PF04545">
    <property type="entry name" value="Sigma70_r4"/>
    <property type="match status" value="1"/>
</dbReference>
<dbReference type="PRINTS" id="PR00046">
    <property type="entry name" value="SIGMA70FCT"/>
</dbReference>
<dbReference type="SUPFAM" id="SSF88946">
    <property type="entry name" value="Sigma2 domain of RNA polymerase sigma factors"/>
    <property type="match status" value="1"/>
</dbReference>
<dbReference type="SUPFAM" id="SSF88659">
    <property type="entry name" value="Sigma3 and sigma4 domains of RNA polymerase sigma factors"/>
    <property type="match status" value="2"/>
</dbReference>
<dbReference type="PROSITE" id="PS00715">
    <property type="entry name" value="SIGMA70_1"/>
    <property type="match status" value="1"/>
</dbReference>
<dbReference type="PROSITE" id="PS00716">
    <property type="entry name" value="SIGMA70_2"/>
    <property type="match status" value="1"/>
</dbReference>
<protein>
    <recommendedName>
        <fullName evidence="1">RNA polymerase sigma factor RpoD</fullName>
    </recommendedName>
    <alternativeName>
        <fullName>Major vegetative sigma factor</fullName>
    </alternativeName>
    <alternativeName>
        <fullName evidence="1">Sigma-70</fullName>
    </alternativeName>
</protein>
<organism>
    <name type="scientific">Treponema pallidum (strain Nichols)</name>
    <dbReference type="NCBI Taxonomy" id="243276"/>
    <lineage>
        <taxon>Bacteria</taxon>
        <taxon>Pseudomonadati</taxon>
        <taxon>Spirochaetota</taxon>
        <taxon>Spirochaetia</taxon>
        <taxon>Spirochaetales</taxon>
        <taxon>Treponemataceae</taxon>
        <taxon>Treponema</taxon>
    </lineage>
</organism>
<feature type="chain" id="PRO_0000093930" description="RNA polymerase sigma factor RpoD">
    <location>
        <begin position="1"/>
        <end position="611"/>
    </location>
</feature>
<feature type="DNA-binding region" description="H-T-H motif" evidence="1">
    <location>
        <begin position="571"/>
        <end position="590"/>
    </location>
</feature>
<feature type="region of interest" description="Sigma-70 factor domain-2" evidence="1">
    <location>
        <begin position="377"/>
        <end position="447"/>
    </location>
</feature>
<feature type="region of interest" description="Sigma-70 factor domain-3" evidence="1">
    <location>
        <begin position="456"/>
        <end position="532"/>
    </location>
</feature>
<feature type="region of interest" description="Sigma-70 factor domain-4" evidence="1">
    <location>
        <begin position="545"/>
        <end position="598"/>
    </location>
</feature>
<feature type="short sequence motif" description="Interaction with polymerase core subunit RpoC">
    <location>
        <begin position="401"/>
        <end position="404"/>
    </location>
</feature>
<evidence type="ECO:0000255" key="1">
    <source>
        <dbReference type="HAMAP-Rule" id="MF_00963"/>
    </source>
</evidence>
<comment type="function">
    <text evidence="1">Sigma factors are initiation factors that promote the attachment of RNA polymerase to specific initiation sites and are then released. This sigma factor is the primary sigma factor during exponential growth.</text>
</comment>
<comment type="subunit">
    <text evidence="1">Interacts transiently with the RNA polymerase catalytic core.</text>
</comment>
<comment type="subcellular location">
    <subcellularLocation>
        <location evidence="1">Cytoplasm</location>
    </subcellularLocation>
</comment>
<comment type="similarity">
    <text evidence="1">Belongs to the sigma-70 factor family. RpoD/SigA subfamily.</text>
</comment>
<keyword id="KW-0963">Cytoplasm</keyword>
<keyword id="KW-0238">DNA-binding</keyword>
<keyword id="KW-1185">Reference proteome</keyword>
<keyword id="KW-0731">Sigma factor</keyword>
<keyword id="KW-0804">Transcription</keyword>
<keyword id="KW-0805">Transcription regulation</keyword>
<sequence length="611" mass="70902">MMELSRTPAVMRLLEYAREKKAITHDEVENILAHYGVETEELLHDVLDMLEQENIKVFSSEEEELEDEVFAGLKGPAADDGDGSFPLSTERVRDKLCDSSRGARQNLLSNARNIALDDPVKLYLRDIGQEKLLTAEQEVMLSKRMEEGEGIIKDIITQSGLLLPEFYHIGRSLSKKALAVLDPAESGRTRKEISEEMADRRRLKQAYGEVLRSLYPEMRHYMAMKKRLDERGEPVTVLSSDEEVCKQRDKLLSCLQKVDLQLEEIDRFSRKFLDTARKIREYKRRKDRHEKQLMIADLCDMRKIGRGLAVPRQRAKLEETLGMSADCIQEIYTQIQKVTRRLRRIEYDFENTIDGILSMARAIHRGHVMLKKAKDKLINANLRLVVSIAKKYTNRGLLFFDLVQEGNIGLIKAVEKFEYRKGYKFSTYATWWIRQAITRSISDQARTIRVPVHMIEQINKVTRESRQLLQKFGREPSDEEIAQQLCWTVEKVKQVKSVAREPISLETPIGEEEDSSLGDFVPDADVENPSRVTERVLLKEEVRSILSALPAREHEVLRMRFGLDGDYSQTLEEVGLYFDVTRERIRQIEAKALKRLRHPRHSRRLKDFLDS</sequence>